<protein>
    <recommendedName>
        <fullName>Protein SBE22</fullName>
    </recommendedName>
</protein>
<reference key="1">
    <citation type="journal article" date="2004" name="Nature">
        <title>Genome evolution in yeasts.</title>
        <authorList>
            <person name="Dujon B."/>
            <person name="Sherman D."/>
            <person name="Fischer G."/>
            <person name="Durrens P."/>
            <person name="Casaregola S."/>
            <person name="Lafontaine I."/>
            <person name="de Montigny J."/>
            <person name="Marck C."/>
            <person name="Neuveglise C."/>
            <person name="Talla E."/>
            <person name="Goffard N."/>
            <person name="Frangeul L."/>
            <person name="Aigle M."/>
            <person name="Anthouard V."/>
            <person name="Babour A."/>
            <person name="Barbe V."/>
            <person name="Barnay S."/>
            <person name="Blanchin S."/>
            <person name="Beckerich J.-M."/>
            <person name="Beyne E."/>
            <person name="Bleykasten C."/>
            <person name="Boisrame A."/>
            <person name="Boyer J."/>
            <person name="Cattolico L."/>
            <person name="Confanioleri F."/>
            <person name="de Daruvar A."/>
            <person name="Despons L."/>
            <person name="Fabre E."/>
            <person name="Fairhead C."/>
            <person name="Ferry-Dumazet H."/>
            <person name="Groppi A."/>
            <person name="Hantraye F."/>
            <person name="Hennequin C."/>
            <person name="Jauniaux N."/>
            <person name="Joyet P."/>
            <person name="Kachouri R."/>
            <person name="Kerrest A."/>
            <person name="Koszul R."/>
            <person name="Lemaire M."/>
            <person name="Lesur I."/>
            <person name="Ma L."/>
            <person name="Muller H."/>
            <person name="Nicaud J.-M."/>
            <person name="Nikolski M."/>
            <person name="Oztas S."/>
            <person name="Ozier-Kalogeropoulos O."/>
            <person name="Pellenz S."/>
            <person name="Potier S."/>
            <person name="Richard G.-F."/>
            <person name="Straub M.-L."/>
            <person name="Suleau A."/>
            <person name="Swennen D."/>
            <person name="Tekaia F."/>
            <person name="Wesolowski-Louvel M."/>
            <person name="Westhof E."/>
            <person name="Wirth B."/>
            <person name="Zeniou-Meyer M."/>
            <person name="Zivanovic Y."/>
            <person name="Bolotin-Fukuhara M."/>
            <person name="Thierry A."/>
            <person name="Bouchier C."/>
            <person name="Caudron B."/>
            <person name="Scarpelli C."/>
            <person name="Gaillardin C."/>
            <person name="Weissenbach J."/>
            <person name="Wincker P."/>
            <person name="Souciet J.-L."/>
        </authorList>
    </citation>
    <scope>NUCLEOTIDE SEQUENCE [LARGE SCALE GENOMIC DNA]</scope>
    <source>
        <strain>ATCC 2001 / BCRC 20586 / JCM 3761 / NBRC 0622 / NRRL Y-65 / CBS 138</strain>
    </source>
</reference>
<comment type="function">
    <text evidence="1">With SBE2, is involved in cell wall integrity and polarity processes like bud growth.</text>
</comment>
<comment type="subcellular location">
    <subcellularLocation>
        <location evidence="1">Cytoplasm</location>
    </subcellularLocation>
    <subcellularLocation>
        <location evidence="1">Golgi apparatus</location>
    </subcellularLocation>
</comment>
<comment type="similarity">
    <text evidence="3">Belongs to the SBE2 family.</text>
</comment>
<dbReference type="EMBL" id="CR380958">
    <property type="protein sequence ID" value="CAG62245.1"/>
    <property type="molecule type" value="Genomic_DNA"/>
</dbReference>
<dbReference type="RefSeq" id="XP_449271.1">
    <property type="nucleotide sequence ID" value="XM_449271.1"/>
</dbReference>
<dbReference type="SMR" id="Q6FKH3"/>
<dbReference type="FunCoup" id="Q6FKH3">
    <property type="interactions" value="25"/>
</dbReference>
<dbReference type="STRING" id="284593.Q6FKH3"/>
<dbReference type="EnsemblFungi" id="CAGL0L11572g-T">
    <property type="protein sequence ID" value="CAGL0L11572g-T-p1"/>
    <property type="gene ID" value="CAGL0L11572g"/>
</dbReference>
<dbReference type="KEGG" id="cgr:2890971"/>
<dbReference type="CGD" id="CAL0135442">
    <property type="gene designation" value="CAGL0L11572g"/>
</dbReference>
<dbReference type="VEuPathDB" id="FungiDB:CAGL0L11572g"/>
<dbReference type="eggNOG" id="ENOG502QR4N">
    <property type="taxonomic scope" value="Eukaryota"/>
</dbReference>
<dbReference type="HOGENOM" id="CLU_019068_0_0_1"/>
<dbReference type="InParanoid" id="Q6FKH3"/>
<dbReference type="OMA" id="WWNILER"/>
<dbReference type="Proteomes" id="UP000002428">
    <property type="component" value="Chromosome L"/>
</dbReference>
<dbReference type="GO" id="GO:0005794">
    <property type="term" value="C:Golgi apparatus"/>
    <property type="evidence" value="ECO:0007669"/>
    <property type="project" value="UniProtKB-SubCell"/>
</dbReference>
<dbReference type="GO" id="GO:0031505">
    <property type="term" value="P:fungal-type cell wall organization"/>
    <property type="evidence" value="ECO:0007669"/>
    <property type="project" value="EnsemblFungi"/>
</dbReference>
<dbReference type="GO" id="GO:0015031">
    <property type="term" value="P:protein transport"/>
    <property type="evidence" value="ECO:0007669"/>
    <property type="project" value="UniProtKB-KW"/>
</dbReference>
<dbReference type="InterPro" id="IPR031403">
    <property type="entry name" value="Sbe2/Sbe22_C"/>
</dbReference>
<dbReference type="InterPro" id="IPR053949">
    <property type="entry name" value="SBE2/SBE22_M"/>
</dbReference>
<dbReference type="InterPro" id="IPR053948">
    <property type="entry name" value="SBE2/SBE22_N"/>
</dbReference>
<dbReference type="Pfam" id="PF17076">
    <property type="entry name" value="SBE2_C"/>
    <property type="match status" value="1"/>
</dbReference>
<dbReference type="Pfam" id="PF22874">
    <property type="entry name" value="SBE2_M"/>
    <property type="match status" value="1"/>
</dbReference>
<dbReference type="Pfam" id="PF22876">
    <property type="entry name" value="SBE2_N"/>
    <property type="match status" value="1"/>
</dbReference>
<proteinExistence type="inferred from homology"/>
<feature type="chain" id="PRO_0000320508" description="Protein SBE22">
    <location>
        <begin position="1"/>
        <end position="813"/>
    </location>
</feature>
<feature type="region of interest" description="Disordered" evidence="2">
    <location>
        <begin position="1"/>
        <end position="66"/>
    </location>
</feature>
<feature type="region of interest" description="Disordered" evidence="2">
    <location>
        <begin position="107"/>
        <end position="240"/>
    </location>
</feature>
<feature type="region of interest" description="Disordered" evidence="2">
    <location>
        <begin position="331"/>
        <end position="359"/>
    </location>
</feature>
<feature type="compositionally biased region" description="Basic and acidic residues" evidence="2">
    <location>
        <begin position="56"/>
        <end position="66"/>
    </location>
</feature>
<feature type="compositionally biased region" description="Low complexity" evidence="2">
    <location>
        <begin position="107"/>
        <end position="121"/>
    </location>
</feature>
<feature type="compositionally biased region" description="Basic and acidic residues" evidence="2">
    <location>
        <begin position="127"/>
        <end position="138"/>
    </location>
</feature>
<feature type="compositionally biased region" description="Polar residues" evidence="2">
    <location>
        <begin position="139"/>
        <end position="160"/>
    </location>
</feature>
<feature type="compositionally biased region" description="Polar residues" evidence="2">
    <location>
        <begin position="169"/>
        <end position="200"/>
    </location>
</feature>
<feature type="compositionally biased region" description="Polar residues" evidence="2">
    <location>
        <begin position="214"/>
        <end position="234"/>
    </location>
</feature>
<organism>
    <name type="scientific">Candida glabrata (strain ATCC 2001 / BCRC 20586 / JCM 3761 / NBRC 0622 / NRRL Y-65 / CBS 138)</name>
    <name type="common">Yeast</name>
    <name type="synonym">Nakaseomyces glabratus</name>
    <dbReference type="NCBI Taxonomy" id="284593"/>
    <lineage>
        <taxon>Eukaryota</taxon>
        <taxon>Fungi</taxon>
        <taxon>Dikarya</taxon>
        <taxon>Ascomycota</taxon>
        <taxon>Saccharomycotina</taxon>
        <taxon>Saccharomycetes</taxon>
        <taxon>Saccharomycetales</taxon>
        <taxon>Saccharomycetaceae</taxon>
        <taxon>Nakaseomyces</taxon>
    </lineage>
</organism>
<gene>
    <name type="primary">SBE22</name>
    <name type="ordered locus">CAGL0L11572g</name>
</gene>
<name>SBE22_CANGA</name>
<keyword id="KW-0961">Cell wall biogenesis/degradation</keyword>
<keyword id="KW-0963">Cytoplasm</keyword>
<keyword id="KW-0333">Golgi apparatus</keyword>
<keyword id="KW-0653">Protein transport</keyword>
<keyword id="KW-1185">Reference proteome</keyword>
<keyword id="KW-0813">Transport</keyword>
<accession>Q6FKH3</accession>
<evidence type="ECO:0000250" key="1"/>
<evidence type="ECO:0000256" key="2">
    <source>
        <dbReference type="SAM" id="MobiDB-lite"/>
    </source>
</evidence>
<evidence type="ECO:0000305" key="3"/>
<sequence length="813" mass="92043">MIRPRSNLGTLPEEPSVESKSGRTLAGITSSRKESGMRSRTSSGSAQAVGLGLGRRPSDNLFHGHADPLDTMQMLSEALPQPPKIEHGMRRERPISNDSIMTTKSSEIFSTSSSDTQSNISVATNDSEDHSFGMDKSVDNSSTNATLTNRSIENRSNGDSYSIGEKSDVSVNRSTKSGNNPLQRTQSETISVNMSHNRSMNGAMKQPTPPFMGKNSSIPNLRYNSQPQQDNRSVPNGEFGSKLYNLSNSTSAIIPNAGTGSKLALTPSQRYRLRKEQSEHALRDVIKRKEKLYDEQDGIIELQEGDIDGSFIFNVPMSSYSTTSFLNTTRQKDSATNSSSTITERITPGENQSQNNRESNMSFASTISSTSMLDFFEMPTSPIPGVNKVSDFQYLQDTTKHLSSVYLHSSTKLSKSKLSERTASADCLPLEFKEASEKGMEDLLLVSENKLDAVSHTRPSWLPPKDPEEKKLHEREISKTLSMASLDQLEKNKDRDSKIIKDETNKQKYVLLVDRNITRKSSLQSLKKIIWETPINAELRNHIYDMVLQSEARLVTERFTESFDDIIKLSNRIELTKTKEIEIRNLITANIENKAGGKYDVSDDLVLMLKLKSISQQGILPGDELLFHHLLIDDSFENLNQVWEMVNLIQMTCFNEITKDKFDSKILEKSGVVASYMLQDDSFKHEFNANCLNSNTWWNILERVNHDLFMWIIDIIVTMNSQPFKNSPINKEKYSEVNWDVYRDNKVLINYQILISFALNVLLNYHFGFNDLKSLADVKDKNFCIPISEENYLDIDEINSLFVGKWKHYFKKF</sequence>